<keyword id="KW-0030">Aminoacyl-tRNA synthetase</keyword>
<keyword id="KW-0067">ATP-binding</keyword>
<keyword id="KW-0963">Cytoplasm</keyword>
<keyword id="KW-0436">Ligase</keyword>
<keyword id="KW-0547">Nucleotide-binding</keyword>
<keyword id="KW-0648">Protein biosynthesis</keyword>
<keyword id="KW-1185">Reference proteome</keyword>
<comment type="catalytic activity">
    <reaction evidence="1">
        <text>tRNA(Arg) + L-arginine + ATP = L-arginyl-tRNA(Arg) + AMP + diphosphate</text>
        <dbReference type="Rhea" id="RHEA:20301"/>
        <dbReference type="Rhea" id="RHEA-COMP:9658"/>
        <dbReference type="Rhea" id="RHEA-COMP:9673"/>
        <dbReference type="ChEBI" id="CHEBI:30616"/>
        <dbReference type="ChEBI" id="CHEBI:32682"/>
        <dbReference type="ChEBI" id="CHEBI:33019"/>
        <dbReference type="ChEBI" id="CHEBI:78442"/>
        <dbReference type="ChEBI" id="CHEBI:78513"/>
        <dbReference type="ChEBI" id="CHEBI:456215"/>
        <dbReference type="EC" id="6.1.1.19"/>
    </reaction>
</comment>
<comment type="subunit">
    <text evidence="1">Monomer.</text>
</comment>
<comment type="subcellular location">
    <subcellularLocation>
        <location evidence="1">Cytoplasm</location>
    </subcellularLocation>
</comment>
<comment type="similarity">
    <text evidence="1">Belongs to the class-I aminoacyl-tRNA synthetase family.</text>
</comment>
<gene>
    <name evidence="1" type="primary">argS</name>
    <name type="ordered locus">NMB1506</name>
</gene>
<accession>Q9JYM8</accession>
<evidence type="ECO:0000255" key="1">
    <source>
        <dbReference type="HAMAP-Rule" id="MF_00123"/>
    </source>
</evidence>
<protein>
    <recommendedName>
        <fullName evidence="1">Arginine--tRNA ligase</fullName>
        <ecNumber evidence="1">6.1.1.19</ecNumber>
    </recommendedName>
    <alternativeName>
        <fullName evidence="1">Arginyl-tRNA synthetase</fullName>
        <shortName evidence="1">ArgRS</shortName>
    </alternativeName>
</protein>
<organism>
    <name type="scientific">Neisseria meningitidis serogroup B (strain ATCC BAA-335 / MC58)</name>
    <dbReference type="NCBI Taxonomy" id="122586"/>
    <lineage>
        <taxon>Bacteria</taxon>
        <taxon>Pseudomonadati</taxon>
        <taxon>Pseudomonadota</taxon>
        <taxon>Betaproteobacteria</taxon>
        <taxon>Neisseriales</taxon>
        <taxon>Neisseriaceae</taxon>
        <taxon>Neisseria</taxon>
    </lineage>
</organism>
<dbReference type="EC" id="6.1.1.19" evidence="1"/>
<dbReference type="EMBL" id="AE002098">
    <property type="protein sequence ID" value="AAF41862.1"/>
    <property type="molecule type" value="Genomic_DNA"/>
</dbReference>
<dbReference type="PIR" id="F81075">
    <property type="entry name" value="F81075"/>
</dbReference>
<dbReference type="RefSeq" id="NP_274514.1">
    <property type="nucleotide sequence ID" value="NC_003112.2"/>
</dbReference>
<dbReference type="RefSeq" id="WP_002225071.1">
    <property type="nucleotide sequence ID" value="NC_003112.2"/>
</dbReference>
<dbReference type="SMR" id="Q9JYM8"/>
<dbReference type="FunCoup" id="Q9JYM8">
    <property type="interactions" value="478"/>
</dbReference>
<dbReference type="STRING" id="122586.NMB1506"/>
<dbReference type="PaxDb" id="122586-NMB1506"/>
<dbReference type="DNASU" id="903953"/>
<dbReference type="KEGG" id="nme:NMB1506"/>
<dbReference type="PATRIC" id="fig|122586.8.peg.1907"/>
<dbReference type="HOGENOM" id="CLU_006406_5_1_4"/>
<dbReference type="InParanoid" id="Q9JYM8"/>
<dbReference type="OrthoDB" id="9803211at2"/>
<dbReference type="Proteomes" id="UP000000425">
    <property type="component" value="Chromosome"/>
</dbReference>
<dbReference type="GO" id="GO:0005737">
    <property type="term" value="C:cytoplasm"/>
    <property type="evidence" value="ECO:0007669"/>
    <property type="project" value="UniProtKB-SubCell"/>
</dbReference>
<dbReference type="GO" id="GO:0004814">
    <property type="term" value="F:arginine-tRNA ligase activity"/>
    <property type="evidence" value="ECO:0000318"/>
    <property type="project" value="GO_Central"/>
</dbReference>
<dbReference type="GO" id="GO:0005524">
    <property type="term" value="F:ATP binding"/>
    <property type="evidence" value="ECO:0007669"/>
    <property type="project" value="UniProtKB-UniRule"/>
</dbReference>
<dbReference type="GO" id="GO:0006420">
    <property type="term" value="P:arginyl-tRNA aminoacylation"/>
    <property type="evidence" value="ECO:0000318"/>
    <property type="project" value="GO_Central"/>
</dbReference>
<dbReference type="CDD" id="cd07956">
    <property type="entry name" value="Anticodon_Ia_Arg"/>
    <property type="match status" value="1"/>
</dbReference>
<dbReference type="CDD" id="cd00671">
    <property type="entry name" value="ArgRS_core"/>
    <property type="match status" value="1"/>
</dbReference>
<dbReference type="FunFam" id="3.40.50.620:FF:000030">
    <property type="entry name" value="Arginine--tRNA ligase"/>
    <property type="match status" value="1"/>
</dbReference>
<dbReference type="FunFam" id="1.10.730.10:FF:000006">
    <property type="entry name" value="Arginyl-tRNA synthetase 2, mitochondrial"/>
    <property type="match status" value="1"/>
</dbReference>
<dbReference type="Gene3D" id="3.30.1360.70">
    <property type="entry name" value="Arginyl tRNA synthetase N-terminal domain"/>
    <property type="match status" value="1"/>
</dbReference>
<dbReference type="Gene3D" id="3.40.50.620">
    <property type="entry name" value="HUPs"/>
    <property type="match status" value="1"/>
</dbReference>
<dbReference type="Gene3D" id="1.10.730.10">
    <property type="entry name" value="Isoleucyl-tRNA Synthetase, Domain 1"/>
    <property type="match status" value="1"/>
</dbReference>
<dbReference type="HAMAP" id="MF_00123">
    <property type="entry name" value="Arg_tRNA_synth"/>
    <property type="match status" value="1"/>
</dbReference>
<dbReference type="InterPro" id="IPR001412">
    <property type="entry name" value="aa-tRNA-synth_I_CS"/>
</dbReference>
<dbReference type="InterPro" id="IPR001278">
    <property type="entry name" value="Arg-tRNA-ligase"/>
</dbReference>
<dbReference type="InterPro" id="IPR005148">
    <property type="entry name" value="Arg-tRNA-synth_N"/>
</dbReference>
<dbReference type="InterPro" id="IPR036695">
    <property type="entry name" value="Arg-tRNA-synth_N_sf"/>
</dbReference>
<dbReference type="InterPro" id="IPR035684">
    <property type="entry name" value="ArgRS_core"/>
</dbReference>
<dbReference type="InterPro" id="IPR008909">
    <property type="entry name" value="DALR_anticod-bd"/>
</dbReference>
<dbReference type="InterPro" id="IPR014729">
    <property type="entry name" value="Rossmann-like_a/b/a_fold"/>
</dbReference>
<dbReference type="InterPro" id="IPR009080">
    <property type="entry name" value="tRNAsynth_Ia_anticodon-bd"/>
</dbReference>
<dbReference type="NCBIfam" id="TIGR00456">
    <property type="entry name" value="argS"/>
    <property type="match status" value="1"/>
</dbReference>
<dbReference type="PANTHER" id="PTHR11956:SF5">
    <property type="entry name" value="ARGININE--TRNA LIGASE, CYTOPLASMIC"/>
    <property type="match status" value="1"/>
</dbReference>
<dbReference type="PANTHER" id="PTHR11956">
    <property type="entry name" value="ARGINYL-TRNA SYNTHETASE"/>
    <property type="match status" value="1"/>
</dbReference>
<dbReference type="Pfam" id="PF03485">
    <property type="entry name" value="Arg_tRNA_synt_N"/>
    <property type="match status" value="1"/>
</dbReference>
<dbReference type="Pfam" id="PF05746">
    <property type="entry name" value="DALR_1"/>
    <property type="match status" value="1"/>
</dbReference>
<dbReference type="Pfam" id="PF00750">
    <property type="entry name" value="tRNA-synt_1d"/>
    <property type="match status" value="1"/>
</dbReference>
<dbReference type="PRINTS" id="PR01038">
    <property type="entry name" value="TRNASYNTHARG"/>
</dbReference>
<dbReference type="SMART" id="SM01016">
    <property type="entry name" value="Arg_tRNA_synt_N"/>
    <property type="match status" value="1"/>
</dbReference>
<dbReference type="SMART" id="SM00836">
    <property type="entry name" value="DALR_1"/>
    <property type="match status" value="1"/>
</dbReference>
<dbReference type="SUPFAM" id="SSF47323">
    <property type="entry name" value="Anticodon-binding domain of a subclass of class I aminoacyl-tRNA synthetases"/>
    <property type="match status" value="1"/>
</dbReference>
<dbReference type="SUPFAM" id="SSF55190">
    <property type="entry name" value="Arginyl-tRNA synthetase (ArgRS), N-terminal 'additional' domain"/>
    <property type="match status" value="1"/>
</dbReference>
<dbReference type="SUPFAM" id="SSF52374">
    <property type="entry name" value="Nucleotidylyl transferase"/>
    <property type="match status" value="1"/>
</dbReference>
<dbReference type="PROSITE" id="PS00178">
    <property type="entry name" value="AA_TRNA_LIGASE_I"/>
    <property type="match status" value="1"/>
</dbReference>
<name>SYR_NEIMB</name>
<sequence>MNLHQTVEHEAAAAFAAAGIADSPIVLQPTKNAEHGDFQINGVMGAAKKAKQNPRELAQKVAEALADNAVIESAEVAGPGFINLRLRPEFLAQNIQTALNDARFGVAKTDKPQTVVIDYSSPNLAKEMHVGHLRSSIIGDSISRVLAFMGNTVIRQNHVGDWGTQFGMLVAYLVEQQKDNAAFELADLEQFYRAAKVRFDEDPAFADTAREYVVKLQGGDETVLALWKQFVDISLSHAQAVYDTLGLKLRPEDVAGESKYNDDLQPVVDDLVQKGLAVEDDGAKVVFLDEFKNKEGEPAAFIVQKQGGGFLYASTDLACLRYRIGRLKADRLLYVVDHRQALHFEQLFTTSRKAGYLPENVGAAFIGFGTMMGKDGKPFKTRSGDTVKLVDLLTEAVERATALVKEKNPELGADEAAKIGKTVGIGAVKYADLSKNRTSDYVFDWDAMLSFEGNTAPYLQYAYTRVQSVFRKAGEWDANAPTVLTEPLEKQLAAELLKFEDVLQSVADTAYPHYLAAYLYQIATLFSRFYEACPILKAEGASRNSRLQLAKLTGDTLKQGLDLLGIDVLDVM</sequence>
<feature type="chain" id="PRO_0000151583" description="Arginine--tRNA ligase">
    <location>
        <begin position="1"/>
        <end position="572"/>
    </location>
</feature>
<feature type="short sequence motif" description="'HIGH' region">
    <location>
        <begin position="122"/>
        <end position="132"/>
    </location>
</feature>
<proteinExistence type="inferred from homology"/>
<reference key="1">
    <citation type="journal article" date="2000" name="Science">
        <title>Complete genome sequence of Neisseria meningitidis serogroup B strain MC58.</title>
        <authorList>
            <person name="Tettelin H."/>
            <person name="Saunders N.J."/>
            <person name="Heidelberg J.F."/>
            <person name="Jeffries A.C."/>
            <person name="Nelson K.E."/>
            <person name="Eisen J.A."/>
            <person name="Ketchum K.A."/>
            <person name="Hood D.W."/>
            <person name="Peden J.F."/>
            <person name="Dodson R.J."/>
            <person name="Nelson W.C."/>
            <person name="Gwinn M.L."/>
            <person name="DeBoy R.T."/>
            <person name="Peterson J.D."/>
            <person name="Hickey E.K."/>
            <person name="Haft D.H."/>
            <person name="Salzberg S.L."/>
            <person name="White O."/>
            <person name="Fleischmann R.D."/>
            <person name="Dougherty B.A."/>
            <person name="Mason T.M."/>
            <person name="Ciecko A."/>
            <person name="Parksey D.S."/>
            <person name="Blair E."/>
            <person name="Cittone H."/>
            <person name="Clark E.B."/>
            <person name="Cotton M.D."/>
            <person name="Utterback T.R."/>
            <person name="Khouri H.M."/>
            <person name="Qin H."/>
            <person name="Vamathevan J.J."/>
            <person name="Gill J."/>
            <person name="Scarlato V."/>
            <person name="Masignani V."/>
            <person name="Pizza M."/>
            <person name="Grandi G."/>
            <person name="Sun L."/>
            <person name="Smith H.O."/>
            <person name="Fraser C.M."/>
            <person name="Moxon E.R."/>
            <person name="Rappuoli R."/>
            <person name="Venter J.C."/>
        </authorList>
    </citation>
    <scope>NUCLEOTIDE SEQUENCE [LARGE SCALE GENOMIC DNA]</scope>
    <source>
        <strain>ATCC BAA-335 / MC58</strain>
    </source>
</reference>